<protein>
    <recommendedName>
        <fullName>ESF1 homolog</fullName>
    </recommendedName>
    <alternativeName>
        <fullName>ABT1-associated protein</fullName>
    </alternativeName>
</protein>
<accession>Q9H501</accession>
<accession>Q86X92</accession>
<accession>Q9H9Q5</accession>
<accession>Q9HA35</accession>
<accession>Q9NX93</accession>
<accession>Q9P1S6</accession>
<sequence length="851" mass="98796">MSSKQEIMSDQRFRRVAKDPRFWEMPEKDRKVKIDKRFRAMFHDKKFKLNYAVDKRGRPISHSTTEDLKRFYDLSDSDSNLSGEDSKALSQKKIKKKKTQTKKEIDSKNLVEKKKETKKANHKGSENKTDLDNSIGIKKMKTSCKFKIDSNISPKKDSKEFTQKNKKEKKNIVQHTTDSSLEEKQRTLDSGTSEIVKSPRIECSKTRREMQSVVQLIMTRDSDGYENSTDGEMCDKDALEEDSESVSEIGSDEESENEITSVGRASGDDDGSEDDEEEDEDEEEDEDEDSEDDDKSDSGPDLARGKGNIETSSEDEDDTADLFPEESGFEHAWRELDKDAPRADEITRRLAVCNMDWDRLKAKDLLALFNSFKPKGGVIFSVKIYPSEFGKERMKEEQVQGPVELLSIPEDAPEKDWTSREKLRDYQFKRLKYYYAVVDCDSPETASKIYEDCDGLEFESSCSFIDLRFIPDDITFDDEPKDVASEVNLTAYKPKYFTSAAMGTSTVEITWDETDHERITMLNRKFKKEELLDMDFQAYLASSSEDEEEIEEELQGDDGVNVEEDGKTKKSQKDDEEQIAKYRQLLQVIQEKEKKGKENDMEMEIKWVPGLKESAEEMVKNKLEGKDKLTPWEQFLEKKKEKKRLKRKQKALAEEASEEELPSDVDLNDPYFAEEVKQIGINKKSVKSAKDGTSPEEEIEIERQKAEMALLMMDEDEDSKKHFNYNKIVEHQNLSKKKKKQLMKKKELIEDDFEVNVNDARFQAMYTSHLFNLDPSDPNFKKTKAMEKILEEKARQRERKEQELTQAIKKKESEIEKESQRKSIDPALSMLIKSIKTKTEQFQARKKQKVK</sequence>
<gene>
    <name type="primary">ESF1</name>
    <name type="synonym">ABTAP</name>
    <name type="synonym">C20orf6</name>
    <name type="ORF">HDCMC28P</name>
</gene>
<reference key="1">
    <citation type="journal article" date="2001" name="Nature">
        <title>The DNA sequence and comparative analysis of human chromosome 20.</title>
        <authorList>
            <person name="Deloukas P."/>
            <person name="Matthews L.H."/>
            <person name="Ashurst J.L."/>
            <person name="Burton J."/>
            <person name="Gilbert J.G.R."/>
            <person name="Jones M."/>
            <person name="Stavrides G."/>
            <person name="Almeida J.P."/>
            <person name="Babbage A.K."/>
            <person name="Bagguley C.L."/>
            <person name="Bailey J."/>
            <person name="Barlow K.F."/>
            <person name="Bates K.N."/>
            <person name="Beard L.M."/>
            <person name="Beare D.M."/>
            <person name="Beasley O.P."/>
            <person name="Bird C.P."/>
            <person name="Blakey S.E."/>
            <person name="Bridgeman A.M."/>
            <person name="Brown A.J."/>
            <person name="Buck D."/>
            <person name="Burrill W.D."/>
            <person name="Butler A.P."/>
            <person name="Carder C."/>
            <person name="Carter N.P."/>
            <person name="Chapman J.C."/>
            <person name="Clamp M."/>
            <person name="Clark G."/>
            <person name="Clark L.N."/>
            <person name="Clark S.Y."/>
            <person name="Clee C.M."/>
            <person name="Clegg S."/>
            <person name="Cobley V.E."/>
            <person name="Collier R.E."/>
            <person name="Connor R.E."/>
            <person name="Corby N.R."/>
            <person name="Coulson A."/>
            <person name="Coville G.J."/>
            <person name="Deadman R."/>
            <person name="Dhami P.D."/>
            <person name="Dunn M."/>
            <person name="Ellington A.G."/>
            <person name="Frankland J.A."/>
            <person name="Fraser A."/>
            <person name="French L."/>
            <person name="Garner P."/>
            <person name="Grafham D.V."/>
            <person name="Griffiths C."/>
            <person name="Griffiths M.N.D."/>
            <person name="Gwilliam R."/>
            <person name="Hall R.E."/>
            <person name="Hammond S."/>
            <person name="Harley J.L."/>
            <person name="Heath P.D."/>
            <person name="Ho S."/>
            <person name="Holden J.L."/>
            <person name="Howden P.J."/>
            <person name="Huckle E."/>
            <person name="Hunt A.R."/>
            <person name="Hunt S.E."/>
            <person name="Jekosch K."/>
            <person name="Johnson C.M."/>
            <person name="Johnson D."/>
            <person name="Kay M.P."/>
            <person name="Kimberley A.M."/>
            <person name="King A."/>
            <person name="Knights A."/>
            <person name="Laird G.K."/>
            <person name="Lawlor S."/>
            <person name="Lehvaeslaiho M.H."/>
            <person name="Leversha M.A."/>
            <person name="Lloyd C."/>
            <person name="Lloyd D.M."/>
            <person name="Lovell J.D."/>
            <person name="Marsh V.L."/>
            <person name="Martin S.L."/>
            <person name="McConnachie L.J."/>
            <person name="McLay K."/>
            <person name="McMurray A.A."/>
            <person name="Milne S.A."/>
            <person name="Mistry D."/>
            <person name="Moore M.J.F."/>
            <person name="Mullikin J.C."/>
            <person name="Nickerson T."/>
            <person name="Oliver K."/>
            <person name="Parker A."/>
            <person name="Patel R."/>
            <person name="Pearce T.A.V."/>
            <person name="Peck A.I."/>
            <person name="Phillimore B.J.C.T."/>
            <person name="Prathalingam S.R."/>
            <person name="Plumb R.W."/>
            <person name="Ramsay H."/>
            <person name="Rice C.M."/>
            <person name="Ross M.T."/>
            <person name="Scott C.E."/>
            <person name="Sehra H.K."/>
            <person name="Shownkeen R."/>
            <person name="Sims S."/>
            <person name="Skuce C.D."/>
            <person name="Smith M.L."/>
            <person name="Soderlund C."/>
            <person name="Steward C.A."/>
            <person name="Sulston J.E."/>
            <person name="Swann R.M."/>
            <person name="Sycamore N."/>
            <person name="Taylor R."/>
            <person name="Tee L."/>
            <person name="Thomas D.W."/>
            <person name="Thorpe A."/>
            <person name="Tracey A."/>
            <person name="Tromans A.C."/>
            <person name="Vaudin M."/>
            <person name="Wall M."/>
            <person name="Wallis J.M."/>
            <person name="Whitehead S.L."/>
            <person name="Whittaker P."/>
            <person name="Willey D.L."/>
            <person name="Williams L."/>
            <person name="Williams S.A."/>
            <person name="Wilming L."/>
            <person name="Wray P.W."/>
            <person name="Hubbard T."/>
            <person name="Durbin R.M."/>
            <person name="Bentley D.R."/>
            <person name="Beck S."/>
            <person name="Rogers J."/>
        </authorList>
    </citation>
    <scope>NUCLEOTIDE SEQUENCE [LARGE SCALE GENOMIC DNA]</scope>
</reference>
<reference key="2">
    <citation type="journal article" date="2004" name="Nat. Genet.">
        <title>Complete sequencing and characterization of 21,243 full-length human cDNAs.</title>
        <authorList>
            <person name="Ota T."/>
            <person name="Suzuki Y."/>
            <person name="Nishikawa T."/>
            <person name="Otsuki T."/>
            <person name="Sugiyama T."/>
            <person name="Irie R."/>
            <person name="Wakamatsu A."/>
            <person name="Hayashi K."/>
            <person name="Sato H."/>
            <person name="Nagai K."/>
            <person name="Kimura K."/>
            <person name="Makita H."/>
            <person name="Sekine M."/>
            <person name="Obayashi M."/>
            <person name="Nishi T."/>
            <person name="Shibahara T."/>
            <person name="Tanaka T."/>
            <person name="Ishii S."/>
            <person name="Yamamoto J."/>
            <person name="Saito K."/>
            <person name="Kawai Y."/>
            <person name="Isono Y."/>
            <person name="Nakamura Y."/>
            <person name="Nagahari K."/>
            <person name="Murakami K."/>
            <person name="Yasuda T."/>
            <person name="Iwayanagi T."/>
            <person name="Wagatsuma M."/>
            <person name="Shiratori A."/>
            <person name="Sudo H."/>
            <person name="Hosoiri T."/>
            <person name="Kaku Y."/>
            <person name="Kodaira H."/>
            <person name="Kondo H."/>
            <person name="Sugawara M."/>
            <person name="Takahashi M."/>
            <person name="Kanda K."/>
            <person name="Yokoi T."/>
            <person name="Furuya T."/>
            <person name="Kikkawa E."/>
            <person name="Omura Y."/>
            <person name="Abe K."/>
            <person name="Kamihara K."/>
            <person name="Katsuta N."/>
            <person name="Sato K."/>
            <person name="Tanikawa M."/>
            <person name="Yamazaki M."/>
            <person name="Ninomiya K."/>
            <person name="Ishibashi T."/>
            <person name="Yamashita H."/>
            <person name="Murakawa K."/>
            <person name="Fujimori K."/>
            <person name="Tanai H."/>
            <person name="Kimata M."/>
            <person name="Watanabe M."/>
            <person name="Hiraoka S."/>
            <person name="Chiba Y."/>
            <person name="Ishida S."/>
            <person name="Ono Y."/>
            <person name="Takiguchi S."/>
            <person name="Watanabe S."/>
            <person name="Yosida M."/>
            <person name="Hotuta T."/>
            <person name="Kusano J."/>
            <person name="Kanehori K."/>
            <person name="Takahashi-Fujii A."/>
            <person name="Hara H."/>
            <person name="Tanase T.-O."/>
            <person name="Nomura Y."/>
            <person name="Togiya S."/>
            <person name="Komai F."/>
            <person name="Hara R."/>
            <person name="Takeuchi K."/>
            <person name="Arita M."/>
            <person name="Imose N."/>
            <person name="Musashino K."/>
            <person name="Yuuki H."/>
            <person name="Oshima A."/>
            <person name="Sasaki N."/>
            <person name="Aotsuka S."/>
            <person name="Yoshikawa Y."/>
            <person name="Matsunawa H."/>
            <person name="Ichihara T."/>
            <person name="Shiohata N."/>
            <person name="Sano S."/>
            <person name="Moriya S."/>
            <person name="Momiyama H."/>
            <person name="Satoh N."/>
            <person name="Takami S."/>
            <person name="Terashima Y."/>
            <person name="Suzuki O."/>
            <person name="Nakagawa S."/>
            <person name="Senoh A."/>
            <person name="Mizoguchi H."/>
            <person name="Goto Y."/>
            <person name="Shimizu F."/>
            <person name="Wakebe H."/>
            <person name="Hishigaki H."/>
            <person name="Watanabe T."/>
            <person name="Sugiyama A."/>
            <person name="Takemoto M."/>
            <person name="Kawakami B."/>
            <person name="Yamazaki M."/>
            <person name="Watanabe K."/>
            <person name="Kumagai A."/>
            <person name="Itakura S."/>
            <person name="Fukuzumi Y."/>
            <person name="Fujimori Y."/>
            <person name="Komiyama M."/>
            <person name="Tashiro H."/>
            <person name="Tanigami A."/>
            <person name="Fujiwara T."/>
            <person name="Ono T."/>
            <person name="Yamada K."/>
            <person name="Fujii Y."/>
            <person name="Ozaki K."/>
            <person name="Hirao M."/>
            <person name="Ohmori Y."/>
            <person name="Kawabata A."/>
            <person name="Hikiji T."/>
            <person name="Kobatake N."/>
            <person name="Inagaki H."/>
            <person name="Ikema Y."/>
            <person name="Okamoto S."/>
            <person name="Okitani R."/>
            <person name="Kawakami T."/>
            <person name="Noguchi S."/>
            <person name="Itoh T."/>
            <person name="Shigeta K."/>
            <person name="Senba T."/>
            <person name="Matsumura K."/>
            <person name="Nakajima Y."/>
            <person name="Mizuno T."/>
            <person name="Morinaga M."/>
            <person name="Sasaki M."/>
            <person name="Togashi T."/>
            <person name="Oyama M."/>
            <person name="Hata H."/>
            <person name="Watanabe M."/>
            <person name="Komatsu T."/>
            <person name="Mizushima-Sugano J."/>
            <person name="Satoh T."/>
            <person name="Shirai Y."/>
            <person name="Takahashi Y."/>
            <person name="Nakagawa K."/>
            <person name="Okumura K."/>
            <person name="Nagase T."/>
            <person name="Nomura N."/>
            <person name="Kikuchi H."/>
            <person name="Masuho Y."/>
            <person name="Yamashita R."/>
            <person name="Nakai K."/>
            <person name="Yada T."/>
            <person name="Nakamura Y."/>
            <person name="Ohara O."/>
            <person name="Isogai T."/>
            <person name="Sugano S."/>
        </authorList>
    </citation>
    <scope>NUCLEOTIDE SEQUENCE [LARGE SCALE MRNA] OF 1-681 AND 702-851</scope>
    <scope>VARIANT THR-550</scope>
    <source>
        <tissue>Mammary gland</tissue>
    </source>
</reference>
<reference key="3">
    <citation type="journal article" date="2004" name="Genome Res.">
        <title>The status, quality, and expansion of the NIH full-length cDNA project: the Mammalian Gene Collection (MGC).</title>
        <authorList>
            <consortium name="The MGC Project Team"/>
        </authorList>
    </citation>
    <scope>NUCLEOTIDE SEQUENCE [LARGE SCALE MRNA] OF 1-595</scope>
    <scope>VARIANT THR-550</scope>
    <source>
        <tissue>Mammary gland</tissue>
    </source>
</reference>
<reference key="4">
    <citation type="submission" date="1998-05" db="EMBL/GenBank/DDBJ databases">
        <title>A novel gene from human dendritic cell.</title>
        <authorList>
            <person name="Zhao Z."/>
            <person name="Huang X."/>
            <person name="Li N."/>
            <person name="Zhu X."/>
            <person name="Cao X."/>
        </authorList>
    </citation>
    <scope>NUCLEOTIDE SEQUENCE [LARGE SCALE MRNA] OF 185-672</scope>
    <source>
        <tissue>Dendritic cell</tissue>
    </source>
</reference>
<reference key="5">
    <citation type="journal article" date="2006" name="Cell">
        <title>Global, in vivo, and site-specific phosphorylation dynamics in signaling networks.</title>
        <authorList>
            <person name="Olsen J.V."/>
            <person name="Blagoev B."/>
            <person name="Gnad F."/>
            <person name="Macek B."/>
            <person name="Kumar C."/>
            <person name="Mortensen P."/>
            <person name="Mann M."/>
        </authorList>
    </citation>
    <scope>PHOSPHORYLATION [LARGE SCALE ANALYSIS] AT SER-153</scope>
    <scope>IDENTIFICATION BY MASS SPECTROMETRY [LARGE SCALE ANALYSIS]</scope>
    <source>
        <tissue>Cervix carcinoma</tissue>
    </source>
</reference>
<reference key="6">
    <citation type="journal article" date="2008" name="Proc. Natl. Acad. Sci. U.S.A.">
        <title>A quantitative atlas of mitotic phosphorylation.</title>
        <authorList>
            <person name="Dephoure N."/>
            <person name="Zhou C."/>
            <person name="Villen J."/>
            <person name="Beausoleil S.A."/>
            <person name="Bakalarski C.E."/>
            <person name="Elledge S.J."/>
            <person name="Gygi S.P."/>
        </authorList>
    </citation>
    <scope>PHOSPHORYLATION [LARGE SCALE ANALYSIS] AT SER-75; SER-77; SER-79; SER-82; SER-153; SER-179; SER-180; SER-198; THR-311; SER-312; SER-313; SER-657; SER-663; THR-693; SER-694 AND SER-823</scope>
    <scope>IDENTIFICATION BY MASS SPECTROMETRY [LARGE SCALE ANALYSIS]</scope>
    <source>
        <tissue>Cervix carcinoma</tissue>
    </source>
</reference>
<reference key="7">
    <citation type="journal article" date="2009" name="Anal. Chem.">
        <title>Lys-N and trypsin cover complementary parts of the phosphoproteome in a refined SCX-based approach.</title>
        <authorList>
            <person name="Gauci S."/>
            <person name="Helbig A.O."/>
            <person name="Slijper M."/>
            <person name="Krijgsveld J."/>
            <person name="Heck A.J."/>
            <person name="Mohammed S."/>
        </authorList>
    </citation>
    <scope>IDENTIFICATION BY MASS SPECTROMETRY [LARGE SCALE ANALYSIS]</scope>
</reference>
<reference key="8">
    <citation type="journal article" date="2009" name="Sci. Signal.">
        <title>Quantitative phosphoproteomic analysis of T cell receptor signaling reveals system-wide modulation of protein-protein interactions.</title>
        <authorList>
            <person name="Mayya V."/>
            <person name="Lundgren D.H."/>
            <person name="Hwang S.-I."/>
            <person name="Rezaul K."/>
            <person name="Wu L."/>
            <person name="Eng J.K."/>
            <person name="Rodionov V."/>
            <person name="Han D.K."/>
        </authorList>
    </citation>
    <scope>PHOSPHORYLATION [LARGE SCALE ANALYSIS] AT SER-657 AND SER-663</scope>
    <scope>IDENTIFICATION BY MASS SPECTROMETRY [LARGE SCALE ANALYSIS]</scope>
    <source>
        <tissue>Leukemic T-cell</tissue>
    </source>
</reference>
<reference key="9">
    <citation type="journal article" date="2010" name="Sci. Signal.">
        <title>Quantitative phosphoproteomics reveals widespread full phosphorylation site occupancy during mitosis.</title>
        <authorList>
            <person name="Olsen J.V."/>
            <person name="Vermeulen M."/>
            <person name="Santamaria A."/>
            <person name="Kumar C."/>
            <person name="Miller M.L."/>
            <person name="Jensen L.J."/>
            <person name="Gnad F."/>
            <person name="Cox J."/>
            <person name="Jensen T.S."/>
            <person name="Nigg E.A."/>
            <person name="Brunak S."/>
            <person name="Mann M."/>
        </authorList>
    </citation>
    <scope>PHOSPHORYLATION [LARGE SCALE ANALYSIS] AT SER-75; SER-77; SER-79; SER-82; SER-153; SER-198; SER-296; THR-311; SER-312; SER-313; SER-657; SER-663 AND SER-735</scope>
    <scope>IDENTIFICATION BY MASS SPECTROMETRY [LARGE SCALE ANALYSIS]</scope>
    <source>
        <tissue>Cervix carcinoma</tissue>
    </source>
</reference>
<reference key="10">
    <citation type="journal article" date="2011" name="BMC Syst. Biol.">
        <title>Initial characterization of the human central proteome.</title>
        <authorList>
            <person name="Burkard T.R."/>
            <person name="Planyavsky M."/>
            <person name="Kaupe I."/>
            <person name="Breitwieser F.P."/>
            <person name="Buerckstuemmer T."/>
            <person name="Bennett K.L."/>
            <person name="Superti-Furga G."/>
            <person name="Colinge J."/>
        </authorList>
    </citation>
    <scope>IDENTIFICATION BY MASS SPECTROMETRY [LARGE SCALE ANALYSIS]</scope>
</reference>
<reference key="11">
    <citation type="journal article" date="2011" name="Sci. Signal.">
        <title>System-wide temporal characterization of the proteome and phosphoproteome of human embryonic stem cell differentiation.</title>
        <authorList>
            <person name="Rigbolt K.T."/>
            <person name="Prokhorova T.A."/>
            <person name="Akimov V."/>
            <person name="Henningsen J."/>
            <person name="Johansen P.T."/>
            <person name="Kratchmarova I."/>
            <person name="Kassem M."/>
            <person name="Mann M."/>
            <person name="Olsen J.V."/>
            <person name="Blagoev B."/>
        </authorList>
    </citation>
    <scope>PHOSPHORYLATION [LARGE SCALE ANALYSIS] AT SER-75; SER-82; SER-153; SER-296; SER-298; THR-311; SER-312; SER-313; SER-657; SER-663 AND SER-694</scope>
    <scope>IDENTIFICATION BY MASS SPECTROMETRY [LARGE SCALE ANALYSIS]</scope>
</reference>
<reference key="12">
    <citation type="journal article" date="2012" name="Proc. Natl. Acad. Sci. U.S.A.">
        <title>N-terminal acetylome analyses and functional insights of the N-terminal acetyltransferase NatB.</title>
        <authorList>
            <person name="Van Damme P."/>
            <person name="Lasa M."/>
            <person name="Polevoda B."/>
            <person name="Gazquez C."/>
            <person name="Elosegui-Artola A."/>
            <person name="Kim D.S."/>
            <person name="De Juan-Pardo E."/>
            <person name="Demeyer K."/>
            <person name="Hole K."/>
            <person name="Larrea E."/>
            <person name="Timmerman E."/>
            <person name="Prieto J."/>
            <person name="Arnesen T."/>
            <person name="Sherman F."/>
            <person name="Gevaert K."/>
            <person name="Aldabe R."/>
        </authorList>
    </citation>
    <scope>ACETYLATION [LARGE SCALE ANALYSIS] AT SER-2</scope>
    <scope>CLEAVAGE OF INITIATOR METHIONINE [LARGE SCALE ANALYSIS]</scope>
    <scope>IDENTIFICATION BY MASS SPECTROMETRY [LARGE SCALE ANALYSIS]</scope>
</reference>
<reference key="13">
    <citation type="journal article" date="2013" name="J. Proteome Res.">
        <title>Toward a comprehensive characterization of a human cancer cell phosphoproteome.</title>
        <authorList>
            <person name="Zhou H."/>
            <person name="Di Palma S."/>
            <person name="Preisinger C."/>
            <person name="Peng M."/>
            <person name="Polat A.N."/>
            <person name="Heck A.J."/>
            <person name="Mohammed S."/>
        </authorList>
    </citation>
    <scope>PHOSPHORYLATION [LARGE SCALE ANALYSIS] AT SER-134; SER-153; SER-179; SER-198; SER-614; SER-694 AND SER-823</scope>
    <scope>IDENTIFICATION BY MASS SPECTROMETRY [LARGE SCALE ANALYSIS]</scope>
    <source>
        <tissue>Cervix carcinoma</tissue>
        <tissue>Erythroleukemia</tissue>
    </source>
</reference>
<reference key="14">
    <citation type="journal article" date="2014" name="J. Proteomics">
        <title>An enzyme assisted RP-RPLC approach for in-depth analysis of human liver phosphoproteome.</title>
        <authorList>
            <person name="Bian Y."/>
            <person name="Song C."/>
            <person name="Cheng K."/>
            <person name="Dong M."/>
            <person name="Wang F."/>
            <person name="Huang J."/>
            <person name="Sun D."/>
            <person name="Wang L."/>
            <person name="Ye M."/>
            <person name="Zou H."/>
        </authorList>
    </citation>
    <scope>PHOSPHORYLATION [LARGE SCALE ANALYSIS] AT SER-198</scope>
    <scope>IDENTIFICATION BY MASS SPECTROMETRY [LARGE SCALE ANALYSIS]</scope>
    <source>
        <tissue>Liver</tissue>
    </source>
</reference>
<keyword id="KW-0007">Acetylation</keyword>
<keyword id="KW-0175">Coiled coil</keyword>
<keyword id="KW-0539">Nucleus</keyword>
<keyword id="KW-0597">Phosphoprotein</keyword>
<keyword id="KW-1267">Proteomics identification</keyword>
<keyword id="KW-1185">Reference proteome</keyword>
<keyword id="KW-0804">Transcription</keyword>
<keyword id="KW-0805">Transcription regulation</keyword>
<dbReference type="EMBL" id="AL161659">
    <property type="status" value="NOT_ANNOTATED_CDS"/>
    <property type="molecule type" value="Genomic_DNA"/>
</dbReference>
<dbReference type="EMBL" id="AK000375">
    <property type="protein sequence ID" value="BAA91123.1"/>
    <property type="status" value="ALT_SEQ"/>
    <property type="molecule type" value="mRNA"/>
</dbReference>
<dbReference type="EMBL" id="AK022369">
    <property type="protein sequence ID" value="BAB14023.1"/>
    <property type="molecule type" value="mRNA"/>
</dbReference>
<dbReference type="EMBL" id="AK022670">
    <property type="protein sequence ID" value="BAB14167.1"/>
    <property type="status" value="ALT_INIT"/>
    <property type="molecule type" value="mRNA"/>
</dbReference>
<dbReference type="EMBL" id="BC046107">
    <property type="protein sequence ID" value="AAH46107.1"/>
    <property type="molecule type" value="mRNA"/>
</dbReference>
<dbReference type="EMBL" id="AF068285">
    <property type="protein sequence ID" value="AAF65504.1"/>
    <property type="status" value="ALT_FRAME"/>
    <property type="molecule type" value="mRNA"/>
</dbReference>
<dbReference type="CCDS" id="CCDS13117.1"/>
<dbReference type="RefSeq" id="NP_001263309.1">
    <property type="nucleotide sequence ID" value="NM_001276380.2"/>
</dbReference>
<dbReference type="RefSeq" id="NP_057733.2">
    <property type="nucleotide sequence ID" value="NM_016649.3"/>
</dbReference>
<dbReference type="RefSeq" id="XP_016883363.1">
    <property type="nucleotide sequence ID" value="XM_017027874.3"/>
</dbReference>
<dbReference type="BioGRID" id="119620">
    <property type="interactions" value="187"/>
</dbReference>
<dbReference type="FunCoup" id="Q9H501">
    <property type="interactions" value="1207"/>
</dbReference>
<dbReference type="IntAct" id="Q9H501">
    <property type="interactions" value="82"/>
</dbReference>
<dbReference type="MINT" id="Q9H501"/>
<dbReference type="STRING" id="9606.ENSP00000202816"/>
<dbReference type="GlyGen" id="Q9H501">
    <property type="glycosylation" value="1 site, 1 O-linked glycan (1 site)"/>
</dbReference>
<dbReference type="iPTMnet" id="Q9H501"/>
<dbReference type="MetOSite" id="Q9H501"/>
<dbReference type="PhosphoSitePlus" id="Q9H501"/>
<dbReference type="SwissPalm" id="Q9H501"/>
<dbReference type="BioMuta" id="ESF1"/>
<dbReference type="DMDM" id="25452905"/>
<dbReference type="jPOST" id="Q9H501"/>
<dbReference type="MassIVE" id="Q9H501"/>
<dbReference type="PaxDb" id="9606-ENSP00000202816"/>
<dbReference type="PeptideAtlas" id="Q9H501"/>
<dbReference type="ProteomicsDB" id="80886"/>
<dbReference type="Pumba" id="Q9H501"/>
<dbReference type="Antibodypedia" id="24268">
    <property type="antibodies" value="68 antibodies from 17 providers"/>
</dbReference>
<dbReference type="DNASU" id="51575"/>
<dbReference type="Ensembl" id="ENST00000202816.5">
    <property type="protein sequence ID" value="ENSP00000202816.1"/>
    <property type="gene ID" value="ENSG00000089048.15"/>
</dbReference>
<dbReference type="Ensembl" id="ENST00000617257.2">
    <property type="protein sequence ID" value="ENSP00000480783.2"/>
    <property type="gene ID" value="ENSG00000089048.15"/>
</dbReference>
<dbReference type="GeneID" id="51575"/>
<dbReference type="KEGG" id="hsa:51575"/>
<dbReference type="MANE-Select" id="ENST00000617257.2">
    <property type="protein sequence ID" value="ENSP00000480783.2"/>
    <property type="RefSeq nucleotide sequence ID" value="NM_001276380.2"/>
    <property type="RefSeq protein sequence ID" value="NP_001263309.1"/>
</dbReference>
<dbReference type="UCSC" id="uc002woj.3">
    <property type="organism name" value="human"/>
</dbReference>
<dbReference type="AGR" id="HGNC:15898"/>
<dbReference type="CTD" id="51575"/>
<dbReference type="DisGeNET" id="51575"/>
<dbReference type="GeneCards" id="ESF1"/>
<dbReference type="HGNC" id="HGNC:15898">
    <property type="gene designation" value="ESF1"/>
</dbReference>
<dbReference type="HPA" id="ENSG00000089048">
    <property type="expression patterns" value="Low tissue specificity"/>
</dbReference>
<dbReference type="MIM" id="618765">
    <property type="type" value="gene"/>
</dbReference>
<dbReference type="neXtProt" id="NX_Q9H501"/>
<dbReference type="OpenTargets" id="ENSG00000089048"/>
<dbReference type="PharmGKB" id="PA162385420"/>
<dbReference type="VEuPathDB" id="HostDB:ENSG00000089048"/>
<dbReference type="eggNOG" id="KOG2318">
    <property type="taxonomic scope" value="Eukaryota"/>
</dbReference>
<dbReference type="GeneTree" id="ENSGT00390000004881"/>
<dbReference type="InParanoid" id="Q9H501"/>
<dbReference type="OMA" id="DHDFAID"/>
<dbReference type="OrthoDB" id="431825at2759"/>
<dbReference type="PAN-GO" id="Q9H501">
    <property type="GO annotations" value="2 GO annotations based on evolutionary models"/>
</dbReference>
<dbReference type="PhylomeDB" id="Q9H501"/>
<dbReference type="TreeFam" id="TF105822"/>
<dbReference type="PathwayCommons" id="Q9H501"/>
<dbReference type="SignaLink" id="Q9H501"/>
<dbReference type="BioGRID-ORCS" id="51575">
    <property type="hits" value="573 hits in 1166 CRISPR screens"/>
</dbReference>
<dbReference type="CD-CODE" id="91857CE7">
    <property type="entry name" value="Nucleolus"/>
</dbReference>
<dbReference type="ChiTaRS" id="ESF1">
    <property type="organism name" value="human"/>
</dbReference>
<dbReference type="GeneWiki" id="ESF1"/>
<dbReference type="GenomeRNAi" id="51575"/>
<dbReference type="Pharos" id="Q9H501">
    <property type="development level" value="Tbio"/>
</dbReference>
<dbReference type="PRO" id="PR:Q9H501"/>
<dbReference type="Proteomes" id="UP000005640">
    <property type="component" value="Chromosome 20"/>
</dbReference>
<dbReference type="RNAct" id="Q9H501">
    <property type="molecule type" value="protein"/>
</dbReference>
<dbReference type="Bgee" id="ENSG00000089048">
    <property type="expression patterns" value="Expressed in secondary oocyte and 212 other cell types or tissues"/>
</dbReference>
<dbReference type="ExpressionAtlas" id="Q9H501">
    <property type="expression patterns" value="baseline and differential"/>
</dbReference>
<dbReference type="GO" id="GO:0005615">
    <property type="term" value="C:extracellular space"/>
    <property type="evidence" value="ECO:0007005"/>
    <property type="project" value="UniProtKB"/>
</dbReference>
<dbReference type="GO" id="GO:0005730">
    <property type="term" value="C:nucleolus"/>
    <property type="evidence" value="ECO:0007669"/>
    <property type="project" value="UniProtKB-SubCell"/>
</dbReference>
<dbReference type="GO" id="GO:0005654">
    <property type="term" value="C:nucleoplasm"/>
    <property type="evidence" value="ECO:0007669"/>
    <property type="project" value="UniProtKB-SubCell"/>
</dbReference>
<dbReference type="GO" id="GO:0003723">
    <property type="term" value="F:RNA binding"/>
    <property type="evidence" value="ECO:0007005"/>
    <property type="project" value="UniProtKB"/>
</dbReference>
<dbReference type="GO" id="GO:0006364">
    <property type="term" value="P:rRNA processing"/>
    <property type="evidence" value="ECO:0000318"/>
    <property type="project" value="GO_Central"/>
</dbReference>
<dbReference type="Gene3D" id="3.30.70.330">
    <property type="match status" value="1"/>
</dbReference>
<dbReference type="InterPro" id="IPR039754">
    <property type="entry name" value="Esf1"/>
</dbReference>
<dbReference type="InterPro" id="IPR012580">
    <property type="entry name" value="NUC153"/>
</dbReference>
<dbReference type="InterPro" id="IPR012677">
    <property type="entry name" value="Nucleotide-bd_a/b_plait_sf"/>
</dbReference>
<dbReference type="InterPro" id="IPR056750">
    <property type="entry name" value="RRM_ESF1"/>
</dbReference>
<dbReference type="PANTHER" id="PTHR12202">
    <property type="entry name" value="ESF1 HOMOLOG"/>
    <property type="match status" value="1"/>
</dbReference>
<dbReference type="PANTHER" id="PTHR12202:SF0">
    <property type="entry name" value="ESF1 HOMOLOG"/>
    <property type="match status" value="1"/>
</dbReference>
<dbReference type="Pfam" id="PF08159">
    <property type="entry name" value="NUC153"/>
    <property type="match status" value="1"/>
</dbReference>
<dbReference type="Pfam" id="PF25121">
    <property type="entry name" value="RRM_ESF1"/>
    <property type="match status" value="1"/>
</dbReference>
<proteinExistence type="evidence at protein level"/>
<comment type="function">
    <text evidence="1">May constitute a novel regulatory system for basal transcription. Negatively regulates ABT1 (By similarity).</text>
</comment>
<comment type="subunit">
    <text evidence="1">Interacts with ABT1. Forms a complex with ABT1 and suppresses the ABT1-induced activation of polymerase II-directed transcription in mammalian cells (By similarity).</text>
</comment>
<comment type="subcellular location">
    <subcellularLocation>
        <location evidence="1">Nucleus</location>
        <location evidence="1">Nucleolus</location>
    </subcellularLocation>
    <subcellularLocation>
        <location evidence="1">Nucleus</location>
        <location evidence="1">Nucleoplasm</location>
    </subcellularLocation>
</comment>
<comment type="similarity">
    <text evidence="6">Belongs to the ESF1 family.</text>
</comment>
<comment type="sequence caution" evidence="6">
    <conflict type="frameshift">
        <sequence resource="EMBL-CDS" id="AAF65504"/>
    </conflict>
</comment>
<comment type="sequence caution" evidence="6">
    <conflict type="miscellaneous discrepancy">
        <sequence resource="EMBL-CDS" id="BAA91123"/>
    </conflict>
    <text>Contaminating sequence. Potential poly-A sequence.</text>
</comment>
<comment type="sequence caution" evidence="6">
    <conflict type="erroneous initiation">
        <sequence resource="EMBL-CDS" id="BAB14167"/>
    </conflict>
</comment>
<name>ESF1_HUMAN</name>
<feature type="initiator methionine" description="Removed" evidence="12">
    <location>
        <position position="1"/>
    </location>
</feature>
<feature type="chain" id="PRO_0000079410" description="ESF1 homolog">
    <location>
        <begin position="2"/>
        <end position="851"/>
    </location>
</feature>
<feature type="region of interest" description="Disordered" evidence="3">
    <location>
        <begin position="74"/>
        <end position="134"/>
    </location>
</feature>
<feature type="region of interest" description="Disordered" evidence="3">
    <location>
        <begin position="148"/>
        <end position="328"/>
    </location>
</feature>
<feature type="region of interest" description="Disordered" evidence="3">
    <location>
        <begin position="542"/>
        <end position="576"/>
    </location>
</feature>
<feature type="region of interest" description="Disordered" evidence="3">
    <location>
        <begin position="640"/>
        <end position="667"/>
    </location>
</feature>
<feature type="region of interest" description="Disordered" evidence="3">
    <location>
        <begin position="794"/>
        <end position="827"/>
    </location>
</feature>
<feature type="coiled-coil region" evidence="2">
    <location>
        <begin position="730"/>
        <end position="824"/>
    </location>
</feature>
<feature type="compositionally biased region" description="Basic residues" evidence="3">
    <location>
        <begin position="90"/>
        <end position="100"/>
    </location>
</feature>
<feature type="compositionally biased region" description="Basic and acidic residues" evidence="3">
    <location>
        <begin position="101"/>
        <end position="131"/>
    </location>
</feature>
<feature type="compositionally biased region" description="Basic and acidic residues" evidence="3">
    <location>
        <begin position="154"/>
        <end position="165"/>
    </location>
</feature>
<feature type="compositionally biased region" description="Basic and acidic residues" evidence="3">
    <location>
        <begin position="197"/>
        <end position="210"/>
    </location>
</feature>
<feature type="compositionally biased region" description="Acidic residues" evidence="3">
    <location>
        <begin position="238"/>
        <end position="257"/>
    </location>
</feature>
<feature type="compositionally biased region" description="Acidic residues" evidence="3">
    <location>
        <begin position="268"/>
        <end position="295"/>
    </location>
</feature>
<feature type="compositionally biased region" description="Acidic residues" evidence="3">
    <location>
        <begin position="312"/>
        <end position="324"/>
    </location>
</feature>
<feature type="compositionally biased region" description="Acidic residues" evidence="3">
    <location>
        <begin position="544"/>
        <end position="563"/>
    </location>
</feature>
<feature type="compositionally biased region" description="Basic and acidic residues" evidence="3">
    <location>
        <begin position="564"/>
        <end position="573"/>
    </location>
</feature>
<feature type="compositionally biased region" description="Basic residues" evidence="3">
    <location>
        <begin position="640"/>
        <end position="650"/>
    </location>
</feature>
<feature type="compositionally biased region" description="Acidic residues" evidence="3">
    <location>
        <begin position="655"/>
        <end position="667"/>
    </location>
</feature>
<feature type="compositionally biased region" description="Basic and acidic residues" evidence="3">
    <location>
        <begin position="794"/>
        <end position="824"/>
    </location>
</feature>
<feature type="modified residue" description="N-acetylserine" evidence="12">
    <location>
        <position position="2"/>
    </location>
</feature>
<feature type="modified residue" description="Phosphoserine" evidence="8 10 11">
    <location>
        <position position="75"/>
    </location>
</feature>
<feature type="modified residue" description="Phosphoserine" evidence="8 10">
    <location>
        <position position="77"/>
    </location>
</feature>
<feature type="modified residue" description="Phosphoserine" evidence="8 10">
    <location>
        <position position="79"/>
    </location>
</feature>
<feature type="modified residue" description="Phosphoserine" evidence="8 10 11">
    <location>
        <position position="82"/>
    </location>
</feature>
<feature type="modified residue" description="Phosphoserine" evidence="13">
    <location>
        <position position="134"/>
    </location>
</feature>
<feature type="modified residue" description="Phosphoserine" evidence="7 8 10 11 13">
    <location>
        <position position="153"/>
    </location>
</feature>
<feature type="modified residue" description="Phosphoserine" evidence="8 13">
    <location>
        <position position="179"/>
    </location>
</feature>
<feature type="modified residue" description="Phosphoserine" evidence="8">
    <location>
        <position position="180"/>
    </location>
</feature>
<feature type="modified residue" description="Phosphoserine" evidence="8 10 13 14">
    <location>
        <position position="198"/>
    </location>
</feature>
<feature type="modified residue" description="Phosphoserine" evidence="10 11">
    <location>
        <position position="296"/>
    </location>
</feature>
<feature type="modified residue" description="Phosphoserine" evidence="11">
    <location>
        <position position="298"/>
    </location>
</feature>
<feature type="modified residue" description="Phosphothreonine" evidence="8 10 11">
    <location>
        <position position="311"/>
    </location>
</feature>
<feature type="modified residue" description="Phosphoserine" evidence="8 10 11">
    <location>
        <position position="312"/>
    </location>
</feature>
<feature type="modified residue" description="Phosphoserine" evidence="8 10 11">
    <location>
        <position position="313"/>
    </location>
</feature>
<feature type="modified residue" description="Phosphoserine" evidence="13">
    <location>
        <position position="614"/>
    </location>
</feature>
<feature type="modified residue" description="Phosphoserine" evidence="8 9 10 11">
    <location>
        <position position="657"/>
    </location>
</feature>
<feature type="modified residue" description="Phosphoserine" evidence="8 9 10 11">
    <location>
        <position position="663"/>
    </location>
</feature>
<feature type="modified residue" description="Phosphothreonine" evidence="8">
    <location>
        <position position="693"/>
    </location>
</feature>
<feature type="modified residue" description="Phosphoserine" evidence="8 11 13">
    <location>
        <position position="694"/>
    </location>
</feature>
<feature type="modified residue" description="Phosphoserine" evidence="10">
    <location>
        <position position="735"/>
    </location>
</feature>
<feature type="modified residue" description="Phosphoserine" evidence="8 13">
    <location>
        <position position="823"/>
    </location>
</feature>
<feature type="sequence variant" id="VAR_053082" description="In dbSNP:rs6079171.">
    <original>P</original>
    <variation>L</variation>
    <location>
        <position position="386"/>
    </location>
</feature>
<feature type="sequence variant" id="VAR_024331" description="In dbSNP:rs3180370." evidence="4 5">
    <original>I</original>
    <variation>T</variation>
    <location>
        <position position="550"/>
    </location>
</feature>
<feature type="sequence variant" id="VAR_053083" description="In dbSNP:rs34414644.">
    <original>I</original>
    <variation>L</variation>
    <location>
        <position position="824"/>
    </location>
</feature>
<feature type="sequence conflict" description="In Ref. 4; AAF65504." evidence="6" ref="4">
    <original>R</original>
    <variation>K</variation>
    <location>
        <position position="186"/>
    </location>
</feature>
<feature type="sequence conflict" description="In Ref. 2; BAB14023." evidence="6" ref="2">
    <original>S</original>
    <variation>T</variation>
    <location>
        <position position="198"/>
    </location>
</feature>
<feature type="sequence conflict" description="In Ref. 2; BAA91123." evidence="6" ref="2">
    <original>S</original>
    <variation>P</variation>
    <location>
        <position position="228"/>
    </location>
</feature>
<feature type="sequence conflict" description="In Ref. 4; AAF65504." evidence="6" ref="4">
    <original>S</original>
    <variation>G</variation>
    <location>
        <position position="298"/>
    </location>
</feature>
<feature type="sequence conflict" description="In Ref. 2; BAA91123." evidence="6" ref="2">
    <original>L</original>
    <variation>S</variation>
    <location>
        <position position="336"/>
    </location>
</feature>
<feature type="sequence conflict" description="In Ref. 4; AAF65504." evidence="6" ref="4">
    <original>A</original>
    <variation>V</variation>
    <location>
        <position position="351"/>
    </location>
</feature>
<feature type="sequence conflict" description="In Ref. 4; AAF65504." evidence="6" ref="4">
    <original>G</original>
    <variation>R</variation>
    <location>
        <position position="390"/>
    </location>
</feature>
<feature type="sequence conflict" description="In Ref. 4; AAF65504." evidence="6" ref="4">
    <original>F</original>
    <variation>Y</variation>
    <location>
        <position position="469"/>
    </location>
</feature>
<feature type="sequence conflict" description="In Ref. 2; BAA91123." evidence="6" ref="2">
    <original>I</original>
    <variation>V</variation>
    <location>
        <position position="474"/>
    </location>
</feature>
<feature type="sequence conflict" description="In Ref. 4; AAF65504." evidence="6" ref="4">
    <original>V</original>
    <variation>A</variation>
    <location>
        <position position="483"/>
    </location>
</feature>
<feature type="sequence conflict" description="In Ref. 2; BAB14023." evidence="6" ref="2">
    <original>T</original>
    <variation>S</variation>
    <location>
        <position position="514"/>
    </location>
</feature>
<feature type="sequence conflict" description="In Ref. 3; AAH46107." evidence="6" ref="3">
    <original>E</original>
    <variation>K</variation>
    <location>
        <position position="593"/>
    </location>
</feature>
<feature type="sequence conflict" description="In Ref. 2; BAB14167." evidence="6" ref="2">
    <original>S</original>
    <variation>P</variation>
    <location>
        <position position="829"/>
    </location>
</feature>
<evidence type="ECO:0000250" key="1"/>
<evidence type="ECO:0000255" key="2"/>
<evidence type="ECO:0000256" key="3">
    <source>
        <dbReference type="SAM" id="MobiDB-lite"/>
    </source>
</evidence>
<evidence type="ECO:0000269" key="4">
    <source>
    </source>
</evidence>
<evidence type="ECO:0000269" key="5">
    <source>
    </source>
</evidence>
<evidence type="ECO:0000305" key="6"/>
<evidence type="ECO:0007744" key="7">
    <source>
    </source>
</evidence>
<evidence type="ECO:0007744" key="8">
    <source>
    </source>
</evidence>
<evidence type="ECO:0007744" key="9">
    <source>
    </source>
</evidence>
<evidence type="ECO:0007744" key="10">
    <source>
    </source>
</evidence>
<evidence type="ECO:0007744" key="11">
    <source>
    </source>
</evidence>
<evidence type="ECO:0007744" key="12">
    <source>
    </source>
</evidence>
<evidence type="ECO:0007744" key="13">
    <source>
    </source>
</evidence>
<evidence type="ECO:0007744" key="14">
    <source>
    </source>
</evidence>
<organism>
    <name type="scientific">Homo sapiens</name>
    <name type="common">Human</name>
    <dbReference type="NCBI Taxonomy" id="9606"/>
    <lineage>
        <taxon>Eukaryota</taxon>
        <taxon>Metazoa</taxon>
        <taxon>Chordata</taxon>
        <taxon>Craniata</taxon>
        <taxon>Vertebrata</taxon>
        <taxon>Euteleostomi</taxon>
        <taxon>Mammalia</taxon>
        <taxon>Eutheria</taxon>
        <taxon>Euarchontoglires</taxon>
        <taxon>Primates</taxon>
        <taxon>Haplorrhini</taxon>
        <taxon>Catarrhini</taxon>
        <taxon>Hominidae</taxon>
        <taxon>Homo</taxon>
    </lineage>
</organism>